<keyword id="KW-0488">Methylation</keyword>
<keyword id="KW-1185">Reference proteome</keyword>
<keyword id="KW-0687">Ribonucleoprotein</keyword>
<keyword id="KW-0689">Ribosomal protein</keyword>
<keyword id="KW-0694">RNA-binding</keyword>
<keyword id="KW-0699">rRNA-binding</keyword>
<keyword id="KW-0820">tRNA-binding</keyword>
<feature type="chain" id="PRO_0000226408" description="Small ribosomal subunit protein uS12">
    <location>
        <begin position="1"/>
        <end position="124"/>
    </location>
</feature>
<feature type="modified residue" description="3-methylthioaspartic acid" evidence="1">
    <location>
        <position position="89"/>
    </location>
</feature>
<sequence length="124" mass="13750">MATTNQLIRKGRKTIKEKSKVPALEACPQRRGVCTRVYTTTPKKPNSAMRKVCRVRLTSGYEVSSYIGGEGHNLQEHSVVLIRGGRVKDLPGVRYHTVRGALDCAGVKDRKQGRSKYGAKKPKV</sequence>
<name>RS12_PSYA2</name>
<comment type="function">
    <text evidence="2">With S4 and S5 plays an important role in translational accuracy.</text>
</comment>
<comment type="function">
    <text evidence="2">Interacts with and stabilizes bases of the 16S rRNA that are involved in tRNA selection in the A site and with the mRNA backbone. Located at the interface of the 30S and 50S subunits, it traverses the body of the 30S subunit contacting proteins on the other side and probably holding the rRNA structure together. The combined cluster of proteins S8, S12 and S17 appears to hold together the shoulder and platform of the 30S subunit.</text>
</comment>
<comment type="subunit">
    <text evidence="2">Part of the 30S ribosomal subunit. Contacts proteins S8 and S17. May interact with IF1 in the 30S initiation complex.</text>
</comment>
<comment type="similarity">
    <text evidence="2">Belongs to the universal ribosomal protein uS12 family.</text>
</comment>
<organism>
    <name type="scientific">Psychrobacter arcticus (strain DSM 17307 / VKM B-2377 / 273-4)</name>
    <dbReference type="NCBI Taxonomy" id="259536"/>
    <lineage>
        <taxon>Bacteria</taxon>
        <taxon>Pseudomonadati</taxon>
        <taxon>Pseudomonadota</taxon>
        <taxon>Gammaproteobacteria</taxon>
        <taxon>Moraxellales</taxon>
        <taxon>Moraxellaceae</taxon>
        <taxon>Psychrobacter</taxon>
    </lineage>
</organism>
<dbReference type="EMBL" id="CP000082">
    <property type="protein sequence ID" value="AAZ19745.1"/>
    <property type="molecule type" value="Genomic_DNA"/>
</dbReference>
<dbReference type="RefSeq" id="WP_011281154.1">
    <property type="nucleotide sequence ID" value="NC_007204.1"/>
</dbReference>
<dbReference type="SMR" id="Q4FQG3"/>
<dbReference type="STRING" id="259536.Psyc_1897"/>
<dbReference type="GeneID" id="60256138"/>
<dbReference type="KEGG" id="par:Psyc_1897"/>
<dbReference type="eggNOG" id="COG0048">
    <property type="taxonomic scope" value="Bacteria"/>
</dbReference>
<dbReference type="HOGENOM" id="CLU_104295_1_2_6"/>
<dbReference type="OrthoDB" id="9802366at2"/>
<dbReference type="Proteomes" id="UP000000546">
    <property type="component" value="Chromosome"/>
</dbReference>
<dbReference type="GO" id="GO:0015935">
    <property type="term" value="C:small ribosomal subunit"/>
    <property type="evidence" value="ECO:0007669"/>
    <property type="project" value="InterPro"/>
</dbReference>
<dbReference type="GO" id="GO:0019843">
    <property type="term" value="F:rRNA binding"/>
    <property type="evidence" value="ECO:0007669"/>
    <property type="project" value="UniProtKB-UniRule"/>
</dbReference>
<dbReference type="GO" id="GO:0003735">
    <property type="term" value="F:structural constituent of ribosome"/>
    <property type="evidence" value="ECO:0007669"/>
    <property type="project" value="InterPro"/>
</dbReference>
<dbReference type="GO" id="GO:0000049">
    <property type="term" value="F:tRNA binding"/>
    <property type="evidence" value="ECO:0007669"/>
    <property type="project" value="UniProtKB-UniRule"/>
</dbReference>
<dbReference type="GO" id="GO:0006412">
    <property type="term" value="P:translation"/>
    <property type="evidence" value="ECO:0007669"/>
    <property type="project" value="UniProtKB-UniRule"/>
</dbReference>
<dbReference type="CDD" id="cd03368">
    <property type="entry name" value="Ribosomal_S12"/>
    <property type="match status" value="1"/>
</dbReference>
<dbReference type="FunFam" id="2.40.50.140:FF:000001">
    <property type="entry name" value="30S ribosomal protein S12"/>
    <property type="match status" value="1"/>
</dbReference>
<dbReference type="Gene3D" id="2.40.50.140">
    <property type="entry name" value="Nucleic acid-binding proteins"/>
    <property type="match status" value="1"/>
</dbReference>
<dbReference type="HAMAP" id="MF_00403_B">
    <property type="entry name" value="Ribosomal_uS12_B"/>
    <property type="match status" value="1"/>
</dbReference>
<dbReference type="InterPro" id="IPR012340">
    <property type="entry name" value="NA-bd_OB-fold"/>
</dbReference>
<dbReference type="InterPro" id="IPR006032">
    <property type="entry name" value="Ribosomal_uS12"/>
</dbReference>
<dbReference type="InterPro" id="IPR005679">
    <property type="entry name" value="Ribosomal_uS12_bac"/>
</dbReference>
<dbReference type="NCBIfam" id="TIGR00981">
    <property type="entry name" value="rpsL_bact"/>
    <property type="match status" value="1"/>
</dbReference>
<dbReference type="PANTHER" id="PTHR11652">
    <property type="entry name" value="30S RIBOSOMAL PROTEIN S12 FAMILY MEMBER"/>
    <property type="match status" value="1"/>
</dbReference>
<dbReference type="Pfam" id="PF00164">
    <property type="entry name" value="Ribosom_S12_S23"/>
    <property type="match status" value="1"/>
</dbReference>
<dbReference type="PIRSF" id="PIRSF002133">
    <property type="entry name" value="Ribosomal_S12/S23"/>
    <property type="match status" value="1"/>
</dbReference>
<dbReference type="PRINTS" id="PR01034">
    <property type="entry name" value="RIBOSOMALS12"/>
</dbReference>
<dbReference type="SUPFAM" id="SSF50249">
    <property type="entry name" value="Nucleic acid-binding proteins"/>
    <property type="match status" value="1"/>
</dbReference>
<dbReference type="PROSITE" id="PS00055">
    <property type="entry name" value="RIBOSOMAL_S12"/>
    <property type="match status" value="1"/>
</dbReference>
<evidence type="ECO:0000250" key="1"/>
<evidence type="ECO:0000255" key="2">
    <source>
        <dbReference type="HAMAP-Rule" id="MF_00403"/>
    </source>
</evidence>
<evidence type="ECO:0000305" key="3"/>
<protein>
    <recommendedName>
        <fullName evidence="2">Small ribosomal subunit protein uS12</fullName>
    </recommendedName>
    <alternativeName>
        <fullName evidence="3">30S ribosomal protein S12</fullName>
    </alternativeName>
</protein>
<proteinExistence type="inferred from homology"/>
<reference key="1">
    <citation type="journal article" date="2010" name="Appl. Environ. Microbiol.">
        <title>The genome sequence of Psychrobacter arcticus 273-4, a psychroactive Siberian permafrost bacterium, reveals mechanisms for adaptation to low-temperature growth.</title>
        <authorList>
            <person name="Ayala-del-Rio H.L."/>
            <person name="Chain P.S."/>
            <person name="Grzymski J.J."/>
            <person name="Ponder M.A."/>
            <person name="Ivanova N."/>
            <person name="Bergholz P.W."/>
            <person name="Di Bartolo G."/>
            <person name="Hauser L."/>
            <person name="Land M."/>
            <person name="Bakermans C."/>
            <person name="Rodrigues D."/>
            <person name="Klappenbach J."/>
            <person name="Zarka D."/>
            <person name="Larimer F."/>
            <person name="Richardson P."/>
            <person name="Murray A."/>
            <person name="Thomashow M."/>
            <person name="Tiedje J.M."/>
        </authorList>
    </citation>
    <scope>NUCLEOTIDE SEQUENCE [LARGE SCALE GENOMIC DNA]</scope>
    <source>
        <strain>DSM 17307 / VKM B-2377 / 273-4</strain>
    </source>
</reference>
<gene>
    <name evidence="2" type="primary">rpsL</name>
    <name type="ordered locus">Psyc_1897</name>
</gene>
<accession>Q4FQG3</accession>